<evidence type="ECO:0000255" key="1">
    <source>
        <dbReference type="HAMAP-Rule" id="MF_00036"/>
    </source>
</evidence>
<organism>
    <name type="scientific">Vibrio cholerae serotype O1 (strain ATCC 39541 / Classical Ogawa 395 / O395)</name>
    <dbReference type="NCBI Taxonomy" id="345073"/>
    <lineage>
        <taxon>Bacteria</taxon>
        <taxon>Pseudomonadati</taxon>
        <taxon>Pseudomonadota</taxon>
        <taxon>Gammaproteobacteria</taxon>
        <taxon>Vibrionales</taxon>
        <taxon>Vibrionaceae</taxon>
        <taxon>Vibrio</taxon>
    </lineage>
</organism>
<name>SYA_VIBC3</name>
<feature type="chain" id="PRO_0000347860" description="Alanine--tRNA ligase">
    <location>
        <begin position="1"/>
        <end position="860"/>
    </location>
</feature>
<feature type="binding site" evidence="1">
    <location>
        <position position="563"/>
    </location>
    <ligand>
        <name>Zn(2+)</name>
        <dbReference type="ChEBI" id="CHEBI:29105"/>
    </ligand>
</feature>
<feature type="binding site" evidence="1">
    <location>
        <position position="567"/>
    </location>
    <ligand>
        <name>Zn(2+)</name>
        <dbReference type="ChEBI" id="CHEBI:29105"/>
    </ligand>
</feature>
<feature type="binding site" evidence="1">
    <location>
        <position position="665"/>
    </location>
    <ligand>
        <name>Zn(2+)</name>
        <dbReference type="ChEBI" id="CHEBI:29105"/>
    </ligand>
</feature>
<feature type="binding site" evidence="1">
    <location>
        <position position="669"/>
    </location>
    <ligand>
        <name>Zn(2+)</name>
        <dbReference type="ChEBI" id="CHEBI:29105"/>
    </ligand>
</feature>
<dbReference type="EC" id="6.1.1.7" evidence="1"/>
<dbReference type="EMBL" id="CP000627">
    <property type="protein sequence ID" value="ABQ21511.1"/>
    <property type="molecule type" value="Genomic_DNA"/>
</dbReference>
<dbReference type="EMBL" id="CP001235">
    <property type="protein sequence ID" value="ACP08581.1"/>
    <property type="molecule type" value="Genomic_DNA"/>
</dbReference>
<dbReference type="RefSeq" id="WP_000481018.1">
    <property type="nucleotide sequence ID" value="NZ_JAACZH010000029.1"/>
</dbReference>
<dbReference type="SMR" id="A5F9B7"/>
<dbReference type="KEGG" id="vco:VC0395_A0072"/>
<dbReference type="KEGG" id="vcr:VC395_0562"/>
<dbReference type="PATRIC" id="fig|345073.21.peg.551"/>
<dbReference type="eggNOG" id="COG0013">
    <property type="taxonomic scope" value="Bacteria"/>
</dbReference>
<dbReference type="HOGENOM" id="CLU_004485_1_1_6"/>
<dbReference type="OrthoDB" id="9803884at2"/>
<dbReference type="Proteomes" id="UP000000249">
    <property type="component" value="Chromosome 2"/>
</dbReference>
<dbReference type="GO" id="GO:0005829">
    <property type="term" value="C:cytosol"/>
    <property type="evidence" value="ECO:0007669"/>
    <property type="project" value="TreeGrafter"/>
</dbReference>
<dbReference type="GO" id="GO:0004813">
    <property type="term" value="F:alanine-tRNA ligase activity"/>
    <property type="evidence" value="ECO:0007669"/>
    <property type="project" value="UniProtKB-UniRule"/>
</dbReference>
<dbReference type="GO" id="GO:0002161">
    <property type="term" value="F:aminoacyl-tRNA deacylase activity"/>
    <property type="evidence" value="ECO:0007669"/>
    <property type="project" value="TreeGrafter"/>
</dbReference>
<dbReference type="GO" id="GO:0005524">
    <property type="term" value="F:ATP binding"/>
    <property type="evidence" value="ECO:0007669"/>
    <property type="project" value="UniProtKB-UniRule"/>
</dbReference>
<dbReference type="GO" id="GO:0000049">
    <property type="term" value="F:tRNA binding"/>
    <property type="evidence" value="ECO:0007669"/>
    <property type="project" value="UniProtKB-KW"/>
</dbReference>
<dbReference type="GO" id="GO:0008270">
    <property type="term" value="F:zinc ion binding"/>
    <property type="evidence" value="ECO:0007669"/>
    <property type="project" value="UniProtKB-UniRule"/>
</dbReference>
<dbReference type="GO" id="GO:0006419">
    <property type="term" value="P:alanyl-tRNA aminoacylation"/>
    <property type="evidence" value="ECO:0007669"/>
    <property type="project" value="UniProtKB-UniRule"/>
</dbReference>
<dbReference type="GO" id="GO:0045892">
    <property type="term" value="P:negative regulation of DNA-templated transcription"/>
    <property type="evidence" value="ECO:0007669"/>
    <property type="project" value="TreeGrafter"/>
</dbReference>
<dbReference type="CDD" id="cd00673">
    <property type="entry name" value="AlaRS_core"/>
    <property type="match status" value="1"/>
</dbReference>
<dbReference type="FunFam" id="2.40.30.130:FF:000001">
    <property type="entry name" value="Alanine--tRNA ligase"/>
    <property type="match status" value="1"/>
</dbReference>
<dbReference type="FunFam" id="3.10.310.40:FF:000001">
    <property type="entry name" value="Alanine--tRNA ligase"/>
    <property type="match status" value="1"/>
</dbReference>
<dbReference type="FunFam" id="3.30.54.20:FF:000001">
    <property type="entry name" value="Alanine--tRNA ligase"/>
    <property type="match status" value="1"/>
</dbReference>
<dbReference type="FunFam" id="3.30.930.10:FF:000004">
    <property type="entry name" value="Alanine--tRNA ligase"/>
    <property type="match status" value="1"/>
</dbReference>
<dbReference type="FunFam" id="3.30.980.10:FF:000004">
    <property type="entry name" value="Alanine--tRNA ligase, cytoplasmic"/>
    <property type="match status" value="1"/>
</dbReference>
<dbReference type="Gene3D" id="2.40.30.130">
    <property type="match status" value="1"/>
</dbReference>
<dbReference type="Gene3D" id="3.10.310.40">
    <property type="match status" value="1"/>
</dbReference>
<dbReference type="Gene3D" id="3.30.54.20">
    <property type="match status" value="1"/>
</dbReference>
<dbReference type="Gene3D" id="3.30.930.10">
    <property type="entry name" value="Bira Bifunctional Protein, Domain 2"/>
    <property type="match status" value="1"/>
</dbReference>
<dbReference type="Gene3D" id="3.30.980.10">
    <property type="entry name" value="Threonyl-trna Synthetase, Chain A, domain 2"/>
    <property type="match status" value="1"/>
</dbReference>
<dbReference type="HAMAP" id="MF_00036_B">
    <property type="entry name" value="Ala_tRNA_synth_B"/>
    <property type="match status" value="1"/>
</dbReference>
<dbReference type="InterPro" id="IPR045864">
    <property type="entry name" value="aa-tRNA-synth_II/BPL/LPL"/>
</dbReference>
<dbReference type="InterPro" id="IPR002318">
    <property type="entry name" value="Ala-tRNA-lgiase_IIc"/>
</dbReference>
<dbReference type="InterPro" id="IPR018162">
    <property type="entry name" value="Ala-tRNA-ligase_IIc_anticod-bd"/>
</dbReference>
<dbReference type="InterPro" id="IPR018165">
    <property type="entry name" value="Ala-tRNA-synth_IIc_core"/>
</dbReference>
<dbReference type="InterPro" id="IPR018164">
    <property type="entry name" value="Ala-tRNA-synth_IIc_N"/>
</dbReference>
<dbReference type="InterPro" id="IPR050058">
    <property type="entry name" value="Ala-tRNA_ligase"/>
</dbReference>
<dbReference type="InterPro" id="IPR023033">
    <property type="entry name" value="Ala_tRNA_ligase_euk/bac"/>
</dbReference>
<dbReference type="InterPro" id="IPR003156">
    <property type="entry name" value="DHHA1_dom"/>
</dbReference>
<dbReference type="InterPro" id="IPR018163">
    <property type="entry name" value="Thr/Ala-tRNA-synth_IIc_edit"/>
</dbReference>
<dbReference type="InterPro" id="IPR009000">
    <property type="entry name" value="Transl_B-barrel_sf"/>
</dbReference>
<dbReference type="InterPro" id="IPR012947">
    <property type="entry name" value="tRNA_SAD"/>
</dbReference>
<dbReference type="NCBIfam" id="TIGR00344">
    <property type="entry name" value="alaS"/>
    <property type="match status" value="1"/>
</dbReference>
<dbReference type="PANTHER" id="PTHR11777:SF9">
    <property type="entry name" value="ALANINE--TRNA LIGASE, CYTOPLASMIC"/>
    <property type="match status" value="1"/>
</dbReference>
<dbReference type="PANTHER" id="PTHR11777">
    <property type="entry name" value="ALANYL-TRNA SYNTHETASE"/>
    <property type="match status" value="1"/>
</dbReference>
<dbReference type="Pfam" id="PF02272">
    <property type="entry name" value="DHHA1"/>
    <property type="match status" value="1"/>
</dbReference>
<dbReference type="Pfam" id="PF01411">
    <property type="entry name" value="tRNA-synt_2c"/>
    <property type="match status" value="1"/>
</dbReference>
<dbReference type="Pfam" id="PF07973">
    <property type="entry name" value="tRNA_SAD"/>
    <property type="match status" value="1"/>
</dbReference>
<dbReference type="PRINTS" id="PR00980">
    <property type="entry name" value="TRNASYNTHALA"/>
</dbReference>
<dbReference type="SMART" id="SM00863">
    <property type="entry name" value="tRNA_SAD"/>
    <property type="match status" value="1"/>
</dbReference>
<dbReference type="SUPFAM" id="SSF55681">
    <property type="entry name" value="Class II aaRS and biotin synthetases"/>
    <property type="match status" value="1"/>
</dbReference>
<dbReference type="SUPFAM" id="SSF101353">
    <property type="entry name" value="Putative anticodon-binding domain of alanyl-tRNA synthetase (AlaRS)"/>
    <property type="match status" value="1"/>
</dbReference>
<dbReference type="SUPFAM" id="SSF55186">
    <property type="entry name" value="ThrRS/AlaRS common domain"/>
    <property type="match status" value="1"/>
</dbReference>
<dbReference type="SUPFAM" id="SSF50447">
    <property type="entry name" value="Translation proteins"/>
    <property type="match status" value="1"/>
</dbReference>
<dbReference type="PROSITE" id="PS50860">
    <property type="entry name" value="AA_TRNA_LIGASE_II_ALA"/>
    <property type="match status" value="1"/>
</dbReference>
<protein>
    <recommendedName>
        <fullName evidence="1">Alanine--tRNA ligase</fullName>
        <ecNumber evidence="1">6.1.1.7</ecNumber>
    </recommendedName>
    <alternativeName>
        <fullName evidence="1">Alanyl-tRNA synthetase</fullName>
        <shortName evidence="1">AlaRS</shortName>
    </alternativeName>
</protein>
<accession>A5F9B7</accession>
<accession>C3LX71</accession>
<proteinExistence type="inferred from homology"/>
<reference key="1">
    <citation type="submission" date="2007-03" db="EMBL/GenBank/DDBJ databases">
        <authorList>
            <person name="Heidelberg J."/>
        </authorList>
    </citation>
    <scope>NUCLEOTIDE SEQUENCE [LARGE SCALE GENOMIC DNA]</scope>
    <source>
        <strain>ATCC 39541 / Classical Ogawa 395 / O395</strain>
    </source>
</reference>
<reference key="2">
    <citation type="journal article" date="2008" name="PLoS ONE">
        <title>A recalibrated molecular clock and independent origins for the cholera pandemic clones.</title>
        <authorList>
            <person name="Feng L."/>
            <person name="Reeves P.R."/>
            <person name="Lan R."/>
            <person name="Ren Y."/>
            <person name="Gao C."/>
            <person name="Zhou Z."/>
            <person name="Ren Y."/>
            <person name="Cheng J."/>
            <person name="Wang W."/>
            <person name="Wang J."/>
            <person name="Qian W."/>
            <person name="Li D."/>
            <person name="Wang L."/>
        </authorList>
    </citation>
    <scope>NUCLEOTIDE SEQUENCE [LARGE SCALE GENOMIC DNA]</scope>
    <source>
        <strain>ATCC 39541 / Classical Ogawa 395 / O395</strain>
    </source>
</reference>
<gene>
    <name evidence="1" type="primary">alaS</name>
    <name type="ordered locus">VC0395_A0072</name>
    <name type="ordered locus">VC395_0562</name>
</gene>
<sequence>MFMSTDEVRRAFLSFFESKGHQIVESSSLVPANDPTLLFTNAGMNQFKDCFLGLEKRAYTRATTAQRCVRAGGKHNDLENVGFTARHHTFFEMLGNFSFGDYFKEDAIQYAWEFLTDVLQLPKERLLVTVYETDDEAFDIWNKKVGIPADRIIRIGDKKGGKKFDSDNFWQMGDTGPCGPCTEIFYDHGDHIWGGPPGSPEEDGDRFIEIWNNVFMQFNRHADGTMEPLPKPSVDTGMGIERISAIMQGVHSNYEIDVFQTLIKAAADAIGYQDLTNQSLRVVADHIRSCAFLIVDGVMPSNEGRGYVLRRIIRRAVRHGNKLGAQGAFFHKLVGPLAEVMGTAGVELKKQQALVEKVLRIEEENFGRTLDRGMSILNDALDQLSGQVLDGETVFKLYDTYGFPADLTNDVARERGFSIDEAGFEQAMEEQRQRAREAGQFGTDYNSLIKSATNTEFCGYTASRGQSVVREMFVEGAEVSTLSAGDKAIIVLDNTPFYAESGGQCGDTGVLKTDAGIFHVEDTQKLGNAIAHHGVLAQGVLATGDQVDAIVDEKRRAAISLNHSATHLLHAALRKVLGEHVAQKGSLVRAETLRFDFSHLEAMTAAEIKEVERLVNQEVRRNHSIETNIMNIDEAKAKGAMALFGEKYDDQVRVLSMGDFSTELCGGIHASNTGDIGLFKIISEGGIAAGIRRIEAVTGEGALDYLDAQQAQHDAKVSEMAAKAKLLEKEIQQLKDKLAAKESAGLINQVKQIAGVNVLVAQLNGADNKALRGMVDDLKNQLSSGIIMLGNVAEGKVGLIAGVTNDLTNKVKAGELVNMVALQVGGKGGGRPDMAQAGGTDAHALPSALESVDAWIAERL</sequence>
<keyword id="KW-0030">Aminoacyl-tRNA synthetase</keyword>
<keyword id="KW-0067">ATP-binding</keyword>
<keyword id="KW-0963">Cytoplasm</keyword>
<keyword id="KW-0436">Ligase</keyword>
<keyword id="KW-0479">Metal-binding</keyword>
<keyword id="KW-0547">Nucleotide-binding</keyword>
<keyword id="KW-0648">Protein biosynthesis</keyword>
<keyword id="KW-0694">RNA-binding</keyword>
<keyword id="KW-0820">tRNA-binding</keyword>
<keyword id="KW-0862">Zinc</keyword>
<comment type="function">
    <text evidence="1">Catalyzes the attachment of alanine to tRNA(Ala) in a two-step reaction: alanine is first activated by ATP to form Ala-AMP and then transferred to the acceptor end of tRNA(Ala). Also edits incorrectly charged Ser-tRNA(Ala) and Gly-tRNA(Ala) via its editing domain.</text>
</comment>
<comment type="catalytic activity">
    <reaction evidence="1">
        <text>tRNA(Ala) + L-alanine + ATP = L-alanyl-tRNA(Ala) + AMP + diphosphate</text>
        <dbReference type="Rhea" id="RHEA:12540"/>
        <dbReference type="Rhea" id="RHEA-COMP:9657"/>
        <dbReference type="Rhea" id="RHEA-COMP:9923"/>
        <dbReference type="ChEBI" id="CHEBI:30616"/>
        <dbReference type="ChEBI" id="CHEBI:33019"/>
        <dbReference type="ChEBI" id="CHEBI:57972"/>
        <dbReference type="ChEBI" id="CHEBI:78442"/>
        <dbReference type="ChEBI" id="CHEBI:78497"/>
        <dbReference type="ChEBI" id="CHEBI:456215"/>
        <dbReference type="EC" id="6.1.1.7"/>
    </reaction>
</comment>
<comment type="cofactor">
    <cofactor evidence="1">
        <name>Zn(2+)</name>
        <dbReference type="ChEBI" id="CHEBI:29105"/>
    </cofactor>
    <text evidence="1">Binds 1 zinc ion per subunit.</text>
</comment>
<comment type="subcellular location">
    <subcellularLocation>
        <location evidence="1">Cytoplasm</location>
    </subcellularLocation>
</comment>
<comment type="domain">
    <text evidence="1">Consists of three domains; the N-terminal catalytic domain, the editing domain and the C-terminal C-Ala domain. The editing domain removes incorrectly charged amino acids, while the C-Ala domain, along with tRNA(Ala), serves as a bridge to cooperatively bring together the editing and aminoacylation centers thus stimulating deacylation of misacylated tRNAs.</text>
</comment>
<comment type="similarity">
    <text evidence="1">Belongs to the class-II aminoacyl-tRNA synthetase family.</text>
</comment>